<feature type="signal peptide" evidence="3">
    <location>
        <begin position="1"/>
        <end position="21"/>
    </location>
</feature>
<feature type="chain" id="PRO_5015099825" description="Non-specific lipid transfer protein GPI-anchored 20">
    <location>
        <begin position="22"/>
        <end position="172"/>
    </location>
</feature>
<feature type="propeptide" id="PRO_0000451651" description="Removed in mature form" evidence="3">
    <location>
        <begin position="173"/>
        <end position="203"/>
    </location>
</feature>
<feature type="region of interest" description="Disordered" evidence="5">
    <location>
        <begin position="119"/>
        <end position="182"/>
    </location>
</feature>
<feature type="compositionally biased region" description="Polar residues" evidence="5">
    <location>
        <begin position="144"/>
        <end position="156"/>
    </location>
</feature>
<feature type="compositionally biased region" description="Polar residues" evidence="5">
    <location>
        <begin position="169"/>
        <end position="179"/>
    </location>
</feature>
<feature type="lipid moiety-binding region" description="GPI-anchor amidated serine" evidence="3">
    <location>
        <position position="172"/>
    </location>
</feature>
<feature type="glycosylation site" description="N-linked (GlcNAc...) asparagine" evidence="4">
    <location>
        <position position="46"/>
    </location>
</feature>
<feature type="glycosylation site" description="N-linked (GlcNAc...) asparagine" evidence="4">
    <location>
        <position position="50"/>
    </location>
</feature>
<feature type="glycosylation site" description="N-linked (GlcNAc...) asparagine" evidence="4">
    <location>
        <position position="88"/>
    </location>
</feature>
<feature type="disulfide bond" evidence="1">
    <location>
        <begin position="29"/>
        <end position="74"/>
    </location>
</feature>
<feature type="disulfide bond" evidence="1">
    <location>
        <begin position="40"/>
        <end position="58"/>
    </location>
</feature>
<feature type="disulfide bond" evidence="1">
    <location>
        <begin position="59"/>
        <end position="99"/>
    </location>
</feature>
<feature type="disulfide bond" evidence="1">
    <location>
        <begin position="72"/>
        <end position="108"/>
    </location>
</feature>
<proteinExistence type="evidence at transcript level"/>
<reference key="1">
    <citation type="journal article" date="2000" name="DNA Res.">
        <title>Structural analysis of Arabidopsis thaliana chromosome 3. II. Sequence features of the 4,251,695 bp regions covered by 90 P1, TAC and BAC clones.</title>
        <authorList>
            <person name="Kaneko T."/>
            <person name="Katoh T."/>
            <person name="Sato S."/>
            <person name="Nakamura Y."/>
            <person name="Asamizu E."/>
            <person name="Tabata S."/>
        </authorList>
    </citation>
    <scope>NUCLEOTIDE SEQUENCE [LARGE SCALE GENOMIC DNA]</scope>
    <source>
        <strain>cv. Columbia</strain>
    </source>
</reference>
<reference key="2">
    <citation type="journal article" date="2017" name="Plant J.">
        <title>Araport11: a complete reannotation of the Arabidopsis thaliana reference genome.</title>
        <authorList>
            <person name="Cheng C.Y."/>
            <person name="Krishnakumar V."/>
            <person name="Chan A.P."/>
            <person name="Thibaud-Nissen F."/>
            <person name="Schobel S."/>
            <person name="Town C.D."/>
        </authorList>
    </citation>
    <scope>GENOME REANNOTATION</scope>
    <source>
        <strain>cv. Columbia</strain>
    </source>
</reference>
<reference key="3">
    <citation type="journal article" date="2003" name="Science">
        <title>Empirical analysis of transcriptional activity in the Arabidopsis genome.</title>
        <authorList>
            <person name="Yamada K."/>
            <person name="Lim J."/>
            <person name="Dale J.M."/>
            <person name="Chen H."/>
            <person name="Shinn P."/>
            <person name="Palm C.J."/>
            <person name="Southwick A.M."/>
            <person name="Wu H.C."/>
            <person name="Kim C.J."/>
            <person name="Nguyen M."/>
            <person name="Pham P.K."/>
            <person name="Cheuk R.F."/>
            <person name="Karlin-Newmann G."/>
            <person name="Liu S.X."/>
            <person name="Lam B."/>
            <person name="Sakano H."/>
            <person name="Wu T."/>
            <person name="Yu G."/>
            <person name="Miranda M."/>
            <person name="Quach H.L."/>
            <person name="Tripp M."/>
            <person name="Chang C.H."/>
            <person name="Lee J.M."/>
            <person name="Toriumi M.J."/>
            <person name="Chan M.M."/>
            <person name="Tang C.C."/>
            <person name="Onodera C.S."/>
            <person name="Deng J.M."/>
            <person name="Akiyama K."/>
            <person name="Ansari Y."/>
            <person name="Arakawa T."/>
            <person name="Banh J."/>
            <person name="Banno F."/>
            <person name="Bowser L."/>
            <person name="Brooks S.Y."/>
            <person name="Carninci P."/>
            <person name="Chao Q."/>
            <person name="Choy N."/>
            <person name="Enju A."/>
            <person name="Goldsmith A.D."/>
            <person name="Gurjal M."/>
            <person name="Hansen N.F."/>
            <person name="Hayashizaki Y."/>
            <person name="Johnson-Hopson C."/>
            <person name="Hsuan V.W."/>
            <person name="Iida K."/>
            <person name="Karnes M."/>
            <person name="Khan S."/>
            <person name="Koesema E."/>
            <person name="Ishida J."/>
            <person name="Jiang P.X."/>
            <person name="Jones T."/>
            <person name="Kawai J."/>
            <person name="Kamiya A."/>
            <person name="Meyers C."/>
            <person name="Nakajima M."/>
            <person name="Narusaka M."/>
            <person name="Seki M."/>
            <person name="Sakurai T."/>
            <person name="Satou M."/>
            <person name="Tamse R."/>
            <person name="Vaysberg M."/>
            <person name="Wallender E.K."/>
            <person name="Wong C."/>
            <person name="Yamamura Y."/>
            <person name="Yuan S."/>
            <person name="Shinozaki K."/>
            <person name="Davis R.W."/>
            <person name="Theologis A."/>
            <person name="Ecker J.R."/>
        </authorList>
    </citation>
    <scope>NUCLEOTIDE SEQUENCE [LARGE SCALE MRNA]</scope>
    <source>
        <strain>cv. Columbia</strain>
    </source>
</reference>
<reference key="4">
    <citation type="journal article" date="2013" name="Plant Mol. Biol.">
        <title>Coexpression patterns indicate that GPI-anchored non-specific lipid transfer proteins are involved in accumulation of cuticular wax, suberin and sporopollenin.</title>
        <authorList>
            <person name="Edstam M.M."/>
            <person name="Blomqvist K."/>
            <person name="Ekloef A."/>
            <person name="Wennergren U."/>
            <person name="Edqvist J."/>
        </authorList>
    </citation>
    <scope>TISSUE SPECIFICITY</scope>
    <scope>GENE FAMILY</scope>
    <scope>NOMENCLATURE</scope>
    <source>
        <strain>cv. Columbia</strain>
    </source>
</reference>
<organism>
    <name type="scientific">Arabidopsis thaliana</name>
    <name type="common">Mouse-ear cress</name>
    <dbReference type="NCBI Taxonomy" id="3702"/>
    <lineage>
        <taxon>Eukaryota</taxon>
        <taxon>Viridiplantae</taxon>
        <taxon>Streptophyta</taxon>
        <taxon>Embryophyta</taxon>
        <taxon>Tracheophyta</taxon>
        <taxon>Spermatophyta</taxon>
        <taxon>Magnoliopsida</taxon>
        <taxon>eudicotyledons</taxon>
        <taxon>Gunneridae</taxon>
        <taxon>Pentapetalae</taxon>
        <taxon>rosids</taxon>
        <taxon>malvids</taxon>
        <taxon>Brassicales</taxon>
        <taxon>Brassicaceae</taxon>
        <taxon>Camelineae</taxon>
        <taxon>Arabidopsis</taxon>
    </lineage>
</organism>
<gene>
    <name evidence="7" type="primary">LTPG20</name>
    <name evidence="9" type="ordered locus">At3g22620</name>
    <name evidence="10" type="ORF">F16J14.17</name>
</gene>
<comment type="function">
    <text evidence="2">Probable lipid transfer protein.</text>
</comment>
<comment type="subcellular location">
    <subcellularLocation>
        <location evidence="3">Cell membrane</location>
        <topology evidence="3">Lipid-anchor</topology>
        <topology evidence="3">GPI-anchor</topology>
    </subcellularLocation>
</comment>
<comment type="tissue specificity">
    <text evidence="6">Expressed in seedlings, preferentially in hypocotyls and roots (PubMed:23893219). Also observed in siliques and sepals (PubMed:23893219).</text>
</comment>
<comment type="similarity">
    <text evidence="8">Belongs to the plant LTP family.</text>
</comment>
<dbReference type="EMBL" id="AP000731">
    <property type="protein sequence ID" value="BAB01476.1"/>
    <property type="molecule type" value="Genomic_DNA"/>
</dbReference>
<dbReference type="EMBL" id="CP002686">
    <property type="protein sequence ID" value="AEE76658.1"/>
    <property type="molecule type" value="Genomic_DNA"/>
</dbReference>
<dbReference type="EMBL" id="AY035005">
    <property type="protein sequence ID" value="AAK59510.1"/>
    <property type="molecule type" value="mRNA"/>
</dbReference>
<dbReference type="EMBL" id="AY113897">
    <property type="protein sequence ID" value="AAM44945.1"/>
    <property type="molecule type" value="mRNA"/>
</dbReference>
<dbReference type="RefSeq" id="NP_566713.1">
    <property type="nucleotide sequence ID" value="NM_113160.3"/>
</dbReference>
<dbReference type="FunCoup" id="Q9LJ85">
    <property type="interactions" value="154"/>
</dbReference>
<dbReference type="STRING" id="3702.Q9LJ85"/>
<dbReference type="GlyCosmos" id="Q9LJ85">
    <property type="glycosylation" value="3 sites, No reported glycans"/>
</dbReference>
<dbReference type="GlyGen" id="Q9LJ85">
    <property type="glycosylation" value="4 sites"/>
</dbReference>
<dbReference type="PaxDb" id="3702-AT3G22620.1"/>
<dbReference type="ProteomicsDB" id="185499"/>
<dbReference type="EnsemblPlants" id="AT3G22620.1">
    <property type="protein sequence ID" value="AT3G22620.1"/>
    <property type="gene ID" value="AT3G22620"/>
</dbReference>
<dbReference type="GeneID" id="821833"/>
<dbReference type="Gramene" id="AT3G22620.1">
    <property type="protein sequence ID" value="AT3G22620.1"/>
    <property type="gene ID" value="AT3G22620"/>
</dbReference>
<dbReference type="KEGG" id="ath:AT3G22620"/>
<dbReference type="Araport" id="AT3G22620"/>
<dbReference type="TAIR" id="AT3G22620">
    <property type="gene designation" value="LTPG20"/>
</dbReference>
<dbReference type="eggNOG" id="ENOG502RZXE">
    <property type="taxonomic scope" value="Eukaryota"/>
</dbReference>
<dbReference type="HOGENOM" id="CLU_085549_2_0_1"/>
<dbReference type="InParanoid" id="Q9LJ85"/>
<dbReference type="OMA" id="TINTPCT"/>
<dbReference type="PhylomeDB" id="Q9LJ85"/>
<dbReference type="PRO" id="PR:Q9LJ85"/>
<dbReference type="Proteomes" id="UP000006548">
    <property type="component" value="Chromosome 3"/>
</dbReference>
<dbReference type="ExpressionAtlas" id="Q9LJ85">
    <property type="expression patterns" value="baseline and differential"/>
</dbReference>
<dbReference type="GO" id="GO:0009941">
    <property type="term" value="C:chloroplast envelope"/>
    <property type="evidence" value="ECO:0007005"/>
    <property type="project" value="TAIR"/>
</dbReference>
<dbReference type="GO" id="GO:0005886">
    <property type="term" value="C:plasma membrane"/>
    <property type="evidence" value="ECO:0007669"/>
    <property type="project" value="UniProtKB-SubCell"/>
</dbReference>
<dbReference type="GO" id="GO:0098552">
    <property type="term" value="C:side of membrane"/>
    <property type="evidence" value="ECO:0007669"/>
    <property type="project" value="UniProtKB-KW"/>
</dbReference>
<dbReference type="CDD" id="cd00010">
    <property type="entry name" value="AAI_LTSS"/>
    <property type="match status" value="1"/>
</dbReference>
<dbReference type="FunFam" id="1.10.110.10:FF:000001">
    <property type="entry name" value="Bifunctional inhibitor/lipid-transfer protein/seed storage 2S albumin superfamily protein"/>
    <property type="match status" value="1"/>
</dbReference>
<dbReference type="Gene3D" id="1.10.110.10">
    <property type="entry name" value="Plant lipid-transfer and hydrophobic proteins"/>
    <property type="match status" value="1"/>
</dbReference>
<dbReference type="InterPro" id="IPR036312">
    <property type="entry name" value="Bifun_inhib/LTP/seed_sf"/>
</dbReference>
<dbReference type="InterPro" id="IPR016140">
    <property type="entry name" value="Bifunc_inhib/LTP/seed_store"/>
</dbReference>
<dbReference type="InterPro" id="IPR043325">
    <property type="entry name" value="LTSS"/>
</dbReference>
<dbReference type="PANTHER" id="PTHR33044">
    <property type="entry name" value="BIFUNCTIONAL INHIBITOR/LIPID-TRANSFER PROTEIN/SEED STORAGE 2S ALBUMIN SUPERFAMILY PROTEIN-RELATED"/>
    <property type="match status" value="1"/>
</dbReference>
<dbReference type="Pfam" id="PF14368">
    <property type="entry name" value="LTP_2"/>
    <property type="match status" value="1"/>
</dbReference>
<dbReference type="SMART" id="SM00499">
    <property type="entry name" value="AAI"/>
    <property type="match status" value="1"/>
</dbReference>
<dbReference type="SUPFAM" id="SSF47699">
    <property type="entry name" value="Bifunctional inhibitor/lipid-transfer protein/seed storage 2S albumin"/>
    <property type="match status" value="1"/>
</dbReference>
<name>LTG20_ARATH</name>
<evidence type="ECO:0000250" key="1">
    <source>
        <dbReference type="UniProtKB" id="A0A0B4JDK1"/>
    </source>
</evidence>
<evidence type="ECO:0000250" key="2">
    <source>
        <dbReference type="UniProtKB" id="Q9C7F7"/>
    </source>
</evidence>
<evidence type="ECO:0000255" key="3"/>
<evidence type="ECO:0000255" key="4">
    <source>
        <dbReference type="PROSITE-ProRule" id="PRU00498"/>
    </source>
</evidence>
<evidence type="ECO:0000256" key="5">
    <source>
        <dbReference type="SAM" id="MobiDB-lite"/>
    </source>
</evidence>
<evidence type="ECO:0000269" key="6">
    <source>
    </source>
</evidence>
<evidence type="ECO:0000303" key="7">
    <source>
    </source>
</evidence>
<evidence type="ECO:0000305" key="8"/>
<evidence type="ECO:0000312" key="9">
    <source>
        <dbReference type="Araport" id="AT3G22620"/>
    </source>
</evidence>
<evidence type="ECO:0000312" key="10">
    <source>
        <dbReference type="EMBL" id="BAB01476.1"/>
    </source>
</evidence>
<sequence>MSKIISLVVAMIAVLALPIRGQQQPLSQCTPSMMTTVSPCMGFITNSSSNGTSPSSDCCNSLRSLTTGGMGCLCLIVTGTVPFNIPINRTTAVSLPRACNMPRVPLQCQANIAPAAAPGPAATFGPSMSPGPETDPIVPEPTPAAQTPQSDTTRPFTPSVDGGAPTSDDGGSTSRPSETPSSAYALSPSLLFFSIALVALKFY</sequence>
<keyword id="KW-1003">Cell membrane</keyword>
<keyword id="KW-1015">Disulfide bond</keyword>
<keyword id="KW-0325">Glycoprotein</keyword>
<keyword id="KW-0336">GPI-anchor</keyword>
<keyword id="KW-0449">Lipoprotein</keyword>
<keyword id="KW-0472">Membrane</keyword>
<keyword id="KW-1185">Reference proteome</keyword>
<keyword id="KW-0732">Signal</keyword>
<accession>Q9LJ85</accession>
<accession>A0A178VCH3</accession>
<protein>
    <recommendedName>
        <fullName evidence="7">Non-specific lipid transfer protein GPI-anchored 20</fullName>
        <shortName evidence="7">AtLTPG-20</shortName>
        <shortName evidence="7">Protein LTP-GPI-ANCHORED 20</shortName>
    </recommendedName>
</protein>